<organism>
    <name type="scientific">Enterobacteria phage T4</name>
    <name type="common">Bacteriophage T4</name>
    <dbReference type="NCBI Taxonomy" id="10665"/>
    <lineage>
        <taxon>Viruses</taxon>
        <taxon>Duplodnaviria</taxon>
        <taxon>Heunggongvirae</taxon>
        <taxon>Uroviricota</taxon>
        <taxon>Caudoviricetes</taxon>
        <taxon>Straboviridae</taxon>
        <taxon>Tevenvirinae</taxon>
        <taxon>Tequatrovirus</taxon>
    </lineage>
</organism>
<protein>
    <recommendedName>
        <fullName>Uncharacterized 12.6 kDa protein in pin-nrdC intergenic region</fullName>
    </recommendedName>
</protein>
<sequence>MNIENKLDVDAVLSEIIEDHDAFSENYDFDFSDYLKPIEIEDWVQDGKCQYRQCVYFSPKHNVHVAVNESRSGSYHSDWYYAVPTVELVELRERVVTQTVREWITL</sequence>
<dbReference type="EMBL" id="Y00122">
    <property type="protein sequence ID" value="CAA68305.1"/>
    <property type="molecule type" value="Genomic_DNA"/>
</dbReference>
<dbReference type="EMBL" id="AF158101">
    <property type="protein sequence ID" value="AAD42479.1"/>
    <property type="molecule type" value="Genomic_DNA"/>
</dbReference>
<dbReference type="PIR" id="B29284">
    <property type="entry name" value="Z2BPT9"/>
</dbReference>
<dbReference type="RefSeq" id="NP_049696.1">
    <property type="nucleotide sequence ID" value="NC_000866.4"/>
</dbReference>
<dbReference type="GeneID" id="1258651"/>
<dbReference type="KEGG" id="vg:1258651"/>
<dbReference type="OrthoDB" id="17244at10239"/>
<dbReference type="Proteomes" id="UP000009087">
    <property type="component" value="Segment"/>
</dbReference>
<keyword id="KW-1185">Reference proteome</keyword>
<reference key="1">
    <citation type="journal article" date="1987" name="Nucleic Acids Res.">
        <title>Nucleotide sequence and primary structures of gene products coded for by the T4 genome between map positions 48.266 kb and 39.166 kb.</title>
        <authorList>
            <person name="Tomaschewski J."/>
            <person name="Rueger W."/>
        </authorList>
    </citation>
    <scope>NUCLEOTIDE SEQUENCE [GENOMIC DNA]</scope>
    <source>
        <strain>C</strain>
    </source>
</reference>
<reference key="2">
    <citation type="journal article" date="2003" name="Microbiol. Mol. Biol. Rev.">
        <title>Bacteriophage T4 genome.</title>
        <authorList>
            <person name="Miller E.S."/>
            <person name="Kutter E."/>
            <person name="Mosig G."/>
            <person name="Arisaka F."/>
            <person name="Kunisawa T."/>
            <person name="Ruger W."/>
        </authorList>
    </citation>
    <scope>NUCLEOTIDE SEQUENCE [LARGE SCALE GENOMIC DNA]</scope>
</reference>
<gene>
    <name type="primary">y04K</name>
    <name type="synonym">49.2</name>
</gene>
<accession>P07069</accession>
<organismHost>
    <name type="scientific">Escherichia coli</name>
    <dbReference type="NCBI Taxonomy" id="562"/>
</organismHost>
<proteinExistence type="predicted"/>
<feature type="chain" id="PRO_0000165113" description="Uncharacterized 12.6 kDa protein in pin-nrdC intergenic region">
    <location>
        <begin position="1"/>
        <end position="106"/>
    </location>
</feature>
<name>Y04K_BPT4</name>